<gene>
    <name evidence="1" type="primary">nfuA</name>
    <name type="synonym">yhgI</name>
    <name type="ordered locus">SCH_3443</name>
</gene>
<sequence length="191" mass="20938">MIRISDAAQAHFAKLLANQEEGTQIRVFVINPGTPNAECGVSYCPPDAVEATDTALKFDLLTAYVDELSAPYLEDAEIDFVTDQLGSQLTLKAPNAKMRKVADDAPLMERVEYALQSQINPQLAGHGGRVSLMEITDEGYAILQFGGGCNGCSMVDVTLKEGIEKQLLNEFPELKGVRDLTEHQRGEHSYY</sequence>
<proteinExistence type="inferred from homology"/>
<reference key="1">
    <citation type="journal article" date="2005" name="Nucleic Acids Res.">
        <title>The genome sequence of Salmonella enterica serovar Choleraesuis, a highly invasive and resistant zoonotic pathogen.</title>
        <authorList>
            <person name="Chiu C.-H."/>
            <person name="Tang P."/>
            <person name="Chu C."/>
            <person name="Hu S."/>
            <person name="Bao Q."/>
            <person name="Yu J."/>
            <person name="Chou Y.-Y."/>
            <person name="Wang H.-S."/>
            <person name="Lee Y.-S."/>
        </authorList>
    </citation>
    <scope>NUCLEOTIDE SEQUENCE [LARGE SCALE GENOMIC DNA]</scope>
    <source>
        <strain>SC-B67</strain>
    </source>
</reference>
<comment type="function">
    <text evidence="1">Involved in iron-sulfur cluster biogenesis. Binds a 4Fe-4S cluster, can transfer this cluster to apoproteins, and thereby intervenes in the maturation of Fe/S proteins. Could also act as a scaffold/chaperone for damaged Fe/S proteins.</text>
</comment>
<comment type="cofactor">
    <cofactor evidence="1">
        <name>[4Fe-4S] cluster</name>
        <dbReference type="ChEBI" id="CHEBI:49883"/>
    </cofactor>
    <text evidence="1">Binds 1 [4Fe-4S] cluster per subunit. The cluster is presumably bound at the interface of two monomers.</text>
</comment>
<comment type="subunit">
    <text evidence="1">Homodimer.</text>
</comment>
<comment type="similarity">
    <text evidence="1">Belongs to the NfuA family.</text>
</comment>
<accession>Q57IW3</accession>
<organism>
    <name type="scientific">Salmonella choleraesuis (strain SC-B67)</name>
    <dbReference type="NCBI Taxonomy" id="321314"/>
    <lineage>
        <taxon>Bacteria</taxon>
        <taxon>Pseudomonadati</taxon>
        <taxon>Pseudomonadota</taxon>
        <taxon>Gammaproteobacteria</taxon>
        <taxon>Enterobacterales</taxon>
        <taxon>Enterobacteriaceae</taxon>
        <taxon>Salmonella</taxon>
    </lineage>
</organism>
<dbReference type="EMBL" id="AE017220">
    <property type="protein sequence ID" value="AAX67349.1"/>
    <property type="molecule type" value="Genomic_DNA"/>
</dbReference>
<dbReference type="RefSeq" id="WP_000619387.1">
    <property type="nucleotide sequence ID" value="NC_006905.1"/>
</dbReference>
<dbReference type="SMR" id="Q57IW3"/>
<dbReference type="GeneID" id="66757844"/>
<dbReference type="KEGG" id="sec:SCH_3443"/>
<dbReference type="HOGENOM" id="CLU_094569_0_0_6"/>
<dbReference type="Proteomes" id="UP000000538">
    <property type="component" value="Chromosome"/>
</dbReference>
<dbReference type="GO" id="GO:0051539">
    <property type="term" value="F:4 iron, 4 sulfur cluster binding"/>
    <property type="evidence" value="ECO:0007669"/>
    <property type="project" value="UniProtKB-UniRule"/>
</dbReference>
<dbReference type="GO" id="GO:0005506">
    <property type="term" value="F:iron ion binding"/>
    <property type="evidence" value="ECO:0007669"/>
    <property type="project" value="InterPro"/>
</dbReference>
<dbReference type="GO" id="GO:0016226">
    <property type="term" value="P:iron-sulfur cluster assembly"/>
    <property type="evidence" value="ECO:0007669"/>
    <property type="project" value="UniProtKB-UniRule"/>
</dbReference>
<dbReference type="GO" id="GO:0051604">
    <property type="term" value="P:protein maturation"/>
    <property type="evidence" value="ECO:0007669"/>
    <property type="project" value="UniProtKB-UniRule"/>
</dbReference>
<dbReference type="FunFam" id="2.60.300.12:FF:000004">
    <property type="entry name" value="Fe/S biogenesis protein NfuA"/>
    <property type="match status" value="1"/>
</dbReference>
<dbReference type="FunFam" id="3.30.300.130:FF:000002">
    <property type="entry name" value="Fe/S biogenesis protein NfuA"/>
    <property type="match status" value="1"/>
</dbReference>
<dbReference type="Gene3D" id="3.30.300.130">
    <property type="entry name" value="Fe-S cluster assembly (FSCA)"/>
    <property type="match status" value="1"/>
</dbReference>
<dbReference type="Gene3D" id="2.60.300.12">
    <property type="entry name" value="HesB-like domain"/>
    <property type="match status" value="1"/>
</dbReference>
<dbReference type="HAMAP" id="MF_01637">
    <property type="entry name" value="Fe_S_biogen_NfuA"/>
    <property type="match status" value="1"/>
</dbReference>
<dbReference type="InterPro" id="IPR017726">
    <property type="entry name" value="Fe/S_biogenesis_protein_NfuA"/>
</dbReference>
<dbReference type="InterPro" id="IPR000361">
    <property type="entry name" value="FeS_biogenesis"/>
</dbReference>
<dbReference type="InterPro" id="IPR034904">
    <property type="entry name" value="FSCA_dom_sf"/>
</dbReference>
<dbReference type="InterPro" id="IPR035903">
    <property type="entry name" value="HesB-like_dom_sf"/>
</dbReference>
<dbReference type="InterPro" id="IPR001075">
    <property type="entry name" value="NIF_FeS_clus_asmbl_NifU_C"/>
</dbReference>
<dbReference type="NCBIfam" id="NF008392">
    <property type="entry name" value="PRK11190.1"/>
    <property type="match status" value="1"/>
</dbReference>
<dbReference type="NCBIfam" id="TIGR03341">
    <property type="entry name" value="YhgI_GntY"/>
    <property type="match status" value="1"/>
</dbReference>
<dbReference type="PANTHER" id="PTHR11178:SF51">
    <property type="entry name" value="FE_S BIOGENESIS PROTEIN NFUA"/>
    <property type="match status" value="1"/>
</dbReference>
<dbReference type="PANTHER" id="PTHR11178">
    <property type="entry name" value="IRON-SULFUR CLUSTER SCAFFOLD PROTEIN NFU-RELATED"/>
    <property type="match status" value="1"/>
</dbReference>
<dbReference type="Pfam" id="PF01521">
    <property type="entry name" value="Fe-S_biosyn"/>
    <property type="match status" value="1"/>
</dbReference>
<dbReference type="Pfam" id="PF01106">
    <property type="entry name" value="NifU"/>
    <property type="match status" value="1"/>
</dbReference>
<dbReference type="SUPFAM" id="SSF117916">
    <property type="entry name" value="Fe-S cluster assembly (FSCA) domain-like"/>
    <property type="match status" value="1"/>
</dbReference>
<dbReference type="SUPFAM" id="SSF89360">
    <property type="entry name" value="HesB-like domain"/>
    <property type="match status" value="1"/>
</dbReference>
<keyword id="KW-0004">4Fe-4S</keyword>
<keyword id="KW-0408">Iron</keyword>
<keyword id="KW-0411">Iron-sulfur</keyword>
<keyword id="KW-0479">Metal-binding</keyword>
<evidence type="ECO:0000255" key="1">
    <source>
        <dbReference type="HAMAP-Rule" id="MF_01637"/>
    </source>
</evidence>
<protein>
    <recommendedName>
        <fullName evidence="1">Fe/S biogenesis protein NfuA</fullName>
    </recommendedName>
</protein>
<name>NFUA_SALCH</name>
<feature type="chain" id="PRO_0000268237" description="Fe/S biogenesis protein NfuA">
    <location>
        <begin position="1"/>
        <end position="191"/>
    </location>
</feature>
<feature type="binding site" evidence="1">
    <location>
        <position position="149"/>
    </location>
    <ligand>
        <name>[4Fe-4S] cluster</name>
        <dbReference type="ChEBI" id="CHEBI:49883"/>
    </ligand>
</feature>
<feature type="binding site" evidence="1">
    <location>
        <position position="152"/>
    </location>
    <ligand>
        <name>[4Fe-4S] cluster</name>
        <dbReference type="ChEBI" id="CHEBI:49883"/>
    </ligand>
</feature>